<dbReference type="EC" id="4.1.1.23" evidence="1"/>
<dbReference type="EMBL" id="AM933173">
    <property type="protein sequence ID" value="CAR37280.1"/>
    <property type="molecule type" value="Genomic_DNA"/>
</dbReference>
<dbReference type="RefSeq" id="WP_001675160.1">
    <property type="nucleotide sequence ID" value="NC_011274.1"/>
</dbReference>
<dbReference type="SMR" id="B5R6P3"/>
<dbReference type="KEGG" id="seg:SG1407"/>
<dbReference type="HOGENOM" id="CLU_067069_0_0_6"/>
<dbReference type="UniPathway" id="UPA00070">
    <property type="reaction ID" value="UER00120"/>
</dbReference>
<dbReference type="Proteomes" id="UP000008321">
    <property type="component" value="Chromosome"/>
</dbReference>
<dbReference type="GO" id="GO:0005829">
    <property type="term" value="C:cytosol"/>
    <property type="evidence" value="ECO:0007669"/>
    <property type="project" value="TreeGrafter"/>
</dbReference>
<dbReference type="GO" id="GO:0004590">
    <property type="term" value="F:orotidine-5'-phosphate decarboxylase activity"/>
    <property type="evidence" value="ECO:0007669"/>
    <property type="project" value="UniProtKB-UniRule"/>
</dbReference>
<dbReference type="GO" id="GO:0006207">
    <property type="term" value="P:'de novo' pyrimidine nucleobase biosynthetic process"/>
    <property type="evidence" value="ECO:0007669"/>
    <property type="project" value="InterPro"/>
</dbReference>
<dbReference type="GO" id="GO:0044205">
    <property type="term" value="P:'de novo' UMP biosynthetic process"/>
    <property type="evidence" value="ECO:0007669"/>
    <property type="project" value="UniProtKB-UniRule"/>
</dbReference>
<dbReference type="CDD" id="cd04725">
    <property type="entry name" value="OMP_decarboxylase_like"/>
    <property type="match status" value="1"/>
</dbReference>
<dbReference type="FunFam" id="3.20.20.70:FF:000015">
    <property type="entry name" value="Orotidine 5'-phosphate decarboxylase"/>
    <property type="match status" value="1"/>
</dbReference>
<dbReference type="Gene3D" id="3.20.20.70">
    <property type="entry name" value="Aldolase class I"/>
    <property type="match status" value="1"/>
</dbReference>
<dbReference type="HAMAP" id="MF_01200_B">
    <property type="entry name" value="OMPdecase_type1_B"/>
    <property type="match status" value="1"/>
</dbReference>
<dbReference type="InterPro" id="IPR013785">
    <property type="entry name" value="Aldolase_TIM"/>
</dbReference>
<dbReference type="InterPro" id="IPR014732">
    <property type="entry name" value="OMPdecase"/>
</dbReference>
<dbReference type="InterPro" id="IPR018089">
    <property type="entry name" value="OMPdecase_AS"/>
</dbReference>
<dbReference type="InterPro" id="IPR047596">
    <property type="entry name" value="OMPdecase_bac"/>
</dbReference>
<dbReference type="InterPro" id="IPR001754">
    <property type="entry name" value="OMPdeCOase_dom"/>
</dbReference>
<dbReference type="InterPro" id="IPR011060">
    <property type="entry name" value="RibuloseP-bd_barrel"/>
</dbReference>
<dbReference type="NCBIfam" id="NF001273">
    <property type="entry name" value="PRK00230.1"/>
    <property type="match status" value="1"/>
</dbReference>
<dbReference type="NCBIfam" id="TIGR01740">
    <property type="entry name" value="pyrF"/>
    <property type="match status" value="1"/>
</dbReference>
<dbReference type="PANTHER" id="PTHR32119">
    <property type="entry name" value="OROTIDINE 5'-PHOSPHATE DECARBOXYLASE"/>
    <property type="match status" value="1"/>
</dbReference>
<dbReference type="PANTHER" id="PTHR32119:SF2">
    <property type="entry name" value="OROTIDINE 5'-PHOSPHATE DECARBOXYLASE"/>
    <property type="match status" value="1"/>
</dbReference>
<dbReference type="Pfam" id="PF00215">
    <property type="entry name" value="OMPdecase"/>
    <property type="match status" value="1"/>
</dbReference>
<dbReference type="SMART" id="SM00934">
    <property type="entry name" value="OMPdecase"/>
    <property type="match status" value="1"/>
</dbReference>
<dbReference type="SUPFAM" id="SSF51366">
    <property type="entry name" value="Ribulose-phoshate binding barrel"/>
    <property type="match status" value="1"/>
</dbReference>
<dbReference type="PROSITE" id="PS00156">
    <property type="entry name" value="OMPDECASE"/>
    <property type="match status" value="1"/>
</dbReference>
<keyword id="KW-0210">Decarboxylase</keyword>
<keyword id="KW-0456">Lyase</keyword>
<keyword id="KW-0665">Pyrimidine biosynthesis</keyword>
<gene>
    <name evidence="1" type="primary">pyrF</name>
    <name type="ordered locus">SG1407</name>
</gene>
<accession>B5R6P3</accession>
<reference key="1">
    <citation type="journal article" date="2008" name="Genome Res.">
        <title>Comparative genome analysis of Salmonella enteritidis PT4 and Salmonella gallinarum 287/91 provides insights into evolutionary and host adaptation pathways.</title>
        <authorList>
            <person name="Thomson N.R."/>
            <person name="Clayton D.J."/>
            <person name="Windhorst D."/>
            <person name="Vernikos G."/>
            <person name="Davidson S."/>
            <person name="Churcher C."/>
            <person name="Quail M.A."/>
            <person name="Stevens M."/>
            <person name="Jones M.A."/>
            <person name="Watson M."/>
            <person name="Barron A."/>
            <person name="Layton A."/>
            <person name="Pickard D."/>
            <person name="Kingsley R.A."/>
            <person name="Bignell A."/>
            <person name="Clark L."/>
            <person name="Harris B."/>
            <person name="Ormond D."/>
            <person name="Abdellah Z."/>
            <person name="Brooks K."/>
            <person name="Cherevach I."/>
            <person name="Chillingworth T."/>
            <person name="Woodward J."/>
            <person name="Norberczak H."/>
            <person name="Lord A."/>
            <person name="Arrowsmith C."/>
            <person name="Jagels K."/>
            <person name="Moule S."/>
            <person name="Mungall K."/>
            <person name="Saunders M."/>
            <person name="Whitehead S."/>
            <person name="Chabalgoity J.A."/>
            <person name="Maskell D."/>
            <person name="Humphreys T."/>
            <person name="Roberts M."/>
            <person name="Barrow P.A."/>
            <person name="Dougan G."/>
            <person name="Parkhill J."/>
        </authorList>
    </citation>
    <scope>NUCLEOTIDE SEQUENCE [LARGE SCALE GENOMIC DNA]</scope>
    <source>
        <strain>287/91 / NCTC 13346</strain>
    </source>
</reference>
<feature type="chain" id="PRO_1000138555" description="Orotidine 5'-phosphate decarboxylase">
    <location>
        <begin position="1"/>
        <end position="245"/>
    </location>
</feature>
<feature type="active site" description="Proton donor" evidence="1">
    <location>
        <position position="73"/>
    </location>
</feature>
<feature type="binding site" evidence="1">
    <location>
        <position position="22"/>
    </location>
    <ligand>
        <name>substrate</name>
    </ligand>
</feature>
<feature type="binding site" evidence="1">
    <location>
        <position position="44"/>
    </location>
    <ligand>
        <name>substrate</name>
    </ligand>
</feature>
<feature type="binding site" evidence="1">
    <location>
        <begin position="71"/>
        <end position="80"/>
    </location>
    <ligand>
        <name>substrate</name>
    </ligand>
</feature>
<feature type="binding site" evidence="1">
    <location>
        <position position="131"/>
    </location>
    <ligand>
        <name>substrate</name>
    </ligand>
</feature>
<feature type="binding site" evidence="1">
    <location>
        <position position="192"/>
    </location>
    <ligand>
        <name>substrate</name>
    </ligand>
</feature>
<feature type="binding site" evidence="1">
    <location>
        <position position="201"/>
    </location>
    <ligand>
        <name>substrate</name>
    </ligand>
</feature>
<feature type="binding site" evidence="1">
    <location>
        <position position="221"/>
    </location>
    <ligand>
        <name>substrate</name>
    </ligand>
</feature>
<feature type="binding site" evidence="1">
    <location>
        <position position="222"/>
    </location>
    <ligand>
        <name>substrate</name>
    </ligand>
</feature>
<protein>
    <recommendedName>
        <fullName evidence="1">Orotidine 5'-phosphate decarboxylase</fullName>
        <ecNumber evidence="1">4.1.1.23</ecNumber>
    </recommendedName>
    <alternativeName>
        <fullName evidence="1">OMP decarboxylase</fullName>
        <shortName evidence="1">OMPDCase</shortName>
        <shortName evidence="1">OMPdecase</shortName>
    </alternativeName>
</protein>
<organism>
    <name type="scientific">Salmonella gallinarum (strain 287/91 / NCTC 13346)</name>
    <dbReference type="NCBI Taxonomy" id="550538"/>
    <lineage>
        <taxon>Bacteria</taxon>
        <taxon>Pseudomonadati</taxon>
        <taxon>Pseudomonadota</taxon>
        <taxon>Gammaproteobacteria</taxon>
        <taxon>Enterobacterales</taxon>
        <taxon>Enterobacteriaceae</taxon>
        <taxon>Salmonella</taxon>
    </lineage>
</organism>
<proteinExistence type="inferred from homology"/>
<comment type="function">
    <text evidence="1">Catalyzes the decarboxylation of orotidine 5'-monophosphate (OMP) to uridine 5'-monophosphate (UMP).</text>
</comment>
<comment type="catalytic activity">
    <reaction evidence="1">
        <text>orotidine 5'-phosphate + H(+) = UMP + CO2</text>
        <dbReference type="Rhea" id="RHEA:11596"/>
        <dbReference type="ChEBI" id="CHEBI:15378"/>
        <dbReference type="ChEBI" id="CHEBI:16526"/>
        <dbReference type="ChEBI" id="CHEBI:57538"/>
        <dbReference type="ChEBI" id="CHEBI:57865"/>
        <dbReference type="EC" id="4.1.1.23"/>
    </reaction>
</comment>
<comment type="pathway">
    <text evidence="1">Pyrimidine metabolism; UMP biosynthesis via de novo pathway; UMP from orotate: step 2/2.</text>
</comment>
<comment type="subunit">
    <text evidence="1">Homodimer.</text>
</comment>
<comment type="similarity">
    <text evidence="1">Belongs to the OMP decarboxylase family. Type 1 subfamily.</text>
</comment>
<name>PYRF_SALG2</name>
<sequence length="245" mass="26298">MTFTASSSSCAITESPVVVALDYHERDKALAFVDKIDPRDCRLKVGKEMFTLFGPQLVRDLQQRGFDVFLDLKFHDIPNTTARAVAAAADLGVWMVNVHASGGARMMAAARDALAPFGKDAPLLIAVTVLTSMETSDLHDLGVTLSPAEHAERLARLTQQCGLDGVVCSAQEAVRFKQAFGAAFKLVTPGIRPAGSEAGDQRRIMTPEQALSAGVDYMVIGRPVTQSVDPAQTLKDINASLKREA</sequence>
<evidence type="ECO:0000255" key="1">
    <source>
        <dbReference type="HAMAP-Rule" id="MF_01200"/>
    </source>
</evidence>